<evidence type="ECO:0000250" key="1">
    <source>
        <dbReference type="UniProtKB" id="Q3UL36"/>
    </source>
</evidence>
<evidence type="ECO:0000250" key="2">
    <source>
        <dbReference type="UniProtKB" id="Q9NWB6"/>
    </source>
</evidence>
<evidence type="ECO:0000256" key="3">
    <source>
        <dbReference type="SAM" id="MobiDB-lite"/>
    </source>
</evidence>
<evidence type="ECO:0000305" key="4"/>
<evidence type="ECO:0000312" key="5">
    <source>
        <dbReference type="Proteomes" id="UP000009136"/>
    </source>
</evidence>
<feature type="chain" id="PRO_0000288437" description="Arginine and glutamate-rich protein 1">
    <location>
        <begin position="1"/>
        <end position="273"/>
    </location>
</feature>
<feature type="region of interest" description="Disordered" evidence="3">
    <location>
        <begin position="1"/>
        <end position="113"/>
    </location>
</feature>
<feature type="region of interest" description="Necessary and sufficient for RNA binding" evidence="2">
    <location>
        <begin position="1"/>
        <end position="74"/>
    </location>
</feature>
<feature type="region of interest" description="Necessary and sufficient for transcriptional regulation" evidence="2">
    <location>
        <begin position="75"/>
        <end position="273"/>
    </location>
</feature>
<feature type="region of interest" description="Disordered" evidence="3">
    <location>
        <begin position="238"/>
        <end position="273"/>
    </location>
</feature>
<feature type="short sequence motif" description="LXXLL motif 1; degenerate" evidence="2">
    <location>
        <begin position="172"/>
        <end position="176"/>
    </location>
</feature>
<feature type="short sequence motif" description="LXXLL motif 2; degenerate" evidence="2">
    <location>
        <begin position="201"/>
        <end position="205"/>
    </location>
</feature>
<feature type="compositionally biased region" description="Basic residues" evidence="3">
    <location>
        <begin position="1"/>
        <end position="29"/>
    </location>
</feature>
<feature type="compositionally biased region" description="Basic residues" evidence="3">
    <location>
        <begin position="37"/>
        <end position="58"/>
    </location>
</feature>
<feature type="compositionally biased region" description="Basic and acidic residues" evidence="3">
    <location>
        <begin position="66"/>
        <end position="84"/>
    </location>
</feature>
<feature type="compositionally biased region" description="Basic and acidic residues" evidence="3">
    <location>
        <begin position="93"/>
        <end position="113"/>
    </location>
</feature>
<feature type="compositionally biased region" description="Basic and acidic residues" evidence="3">
    <location>
        <begin position="238"/>
        <end position="253"/>
    </location>
</feature>
<feature type="modified residue" description="Phosphoserine" evidence="2">
    <location>
        <position position="58"/>
    </location>
</feature>
<feature type="modified residue" description="Phosphoserine" evidence="2">
    <location>
        <position position="60"/>
    </location>
</feature>
<feature type="modified residue" description="Phosphothreonine" evidence="2">
    <location>
        <position position="61"/>
    </location>
</feature>
<feature type="modified residue" description="Phosphoserine" evidence="2">
    <location>
        <position position="76"/>
    </location>
</feature>
<feature type="modified residue" description="Phosphoserine" evidence="2">
    <location>
        <position position="77"/>
    </location>
</feature>
<feature type="modified residue" description="Phosphoserine" evidence="2">
    <location>
        <position position="266"/>
    </location>
</feature>
<name>ARGL1_BOVIN</name>
<accession>Q2TA42</accession>
<gene>
    <name type="primary">ARGLU1</name>
</gene>
<keyword id="KW-0158">Chromosome</keyword>
<keyword id="KW-0507">mRNA processing</keyword>
<keyword id="KW-0508">mRNA splicing</keyword>
<keyword id="KW-0539">Nucleus</keyword>
<keyword id="KW-0597">Phosphoprotein</keyword>
<keyword id="KW-1185">Reference proteome</keyword>
<keyword id="KW-0694">RNA-binding</keyword>
<comment type="function">
    <text evidence="1 2">Dual function regulator of gene expression; regulator of transcription and modulator of alternative splicing. General coactivator of nuclear receptor-induced gene expression, including genes activated by the glucocorticoid receptor NR3C1. Binds to a subset of pre-mRNAs and to components of the spliceosome machinery to directly modulate basal alternative splicing; involved in simple and complex cassette exon splicing events (By similarity). Binds its own pre-mRNA and regulates its alternative splicing and degradation; one of the alternatively spliced products is a stable intronic sequence RNA (sisRNA) that binds the protein to regulate its ability to affect splicing (By similarity). Binding of the sisRNA stimulates phase separation and localization to nuclear speckles, which may contribute to activation of nuclear receptor-induced gene expression (By similarity). May also indirectly modulate alternative splicing (By similarity). Regulates transcription of genes involved in heart development, neuronal cell function, protein localization and chromatin localization. Regulates splicing of genes involved in neurogenesis and chromatin organization. Essential for central nervous system development (By similarity). Required for the estrogen-dependent expression of ESR1 target genes. Can act in cooperation with MED1 (By similarity).</text>
</comment>
<comment type="subunit">
    <text evidence="2">Interacts with MED1; the interaction is direct. Interacts with PUF60, U2AF2 and JMJD6; may interact with other proteins involved in RNA processing and splicing.</text>
</comment>
<comment type="subcellular location">
    <subcellularLocation>
        <location evidence="2">Nucleus</location>
    </subcellularLocation>
    <subcellularLocation>
        <location evidence="2">Nucleus speckle</location>
    </subcellularLocation>
    <subcellularLocation>
        <location evidence="2">Chromosome</location>
    </subcellularLocation>
    <text evidence="1 2">Recruited, in an estrogen-dependent manner, to ESR1 target gene promoters (By similarity). Colocalizes with MED1 in nuclear speckles (By similarity). Binding of sisRNA promotes phase separation and localization to nuclear speckles (By similarity). Associated with glucocorticoid response elements of target genes, even in the absence of glucocorticoid receptor ligands (By similarity).</text>
</comment>
<comment type="induction">
    <text evidence="2">Post-transcriptionally regulated by autoregulatory feedback loop (By similarity). ARGLU1 protein binds ARGLU1 pre-mRNA and stimulates alternative splicing to produce two alternative RNA molecules (By similarity). The first includes an additional exon between exons 2 and 3 and is rapidly degraded by nonsense mediated decay (By similarity). The second, a stable intronic sequence RNA (sisRNA), retains the entirety of intron 2 and is able to bind ARGLU1 protein preventing it from stimulating alternative splicing (By similarity).</text>
</comment>
<comment type="domain">
    <text evidence="2">The N-terminal region can bind RNA; preferentially binds 5'-CGG[AG]GG-3' motifs.</text>
</comment>
<comment type="domain">
    <text evidence="2">The non-classical LXXLL motifs are not required for nuclear receptor coactivator activity.</text>
</comment>
<comment type="domain">
    <text evidence="2">The C-terminal region is necessary and sufficient for regulation of transcription and nuclear receptor coactivator activity. The C-terminal region is not required for RNA binding.</text>
</comment>
<comment type="similarity">
    <text evidence="4">Belongs to the ARGLU1 family.</text>
</comment>
<protein>
    <recommendedName>
        <fullName>Arginine and glutamate-rich protein 1</fullName>
    </recommendedName>
</protein>
<proteinExistence type="evidence at transcript level"/>
<dbReference type="EMBL" id="BC111128">
    <property type="protein sequence ID" value="AAI11129.1"/>
    <property type="molecule type" value="mRNA"/>
</dbReference>
<dbReference type="RefSeq" id="NP_001033279.1">
    <property type="nucleotide sequence ID" value="NM_001038190.2"/>
</dbReference>
<dbReference type="SMR" id="Q2TA42"/>
<dbReference type="FunCoup" id="Q2TA42">
    <property type="interactions" value="3420"/>
</dbReference>
<dbReference type="STRING" id="9913.ENSBTAP00000020126"/>
<dbReference type="PaxDb" id="9913-ENSBTAP00000020126"/>
<dbReference type="Ensembl" id="ENSBTAT00000020126.6">
    <property type="protein sequence ID" value="ENSBTAP00000020126.5"/>
    <property type="gene ID" value="ENSBTAG00000015124.6"/>
</dbReference>
<dbReference type="GeneID" id="540543"/>
<dbReference type="KEGG" id="bta:540543"/>
<dbReference type="CTD" id="55082"/>
<dbReference type="VEuPathDB" id="HostDB:ENSBTAG00000015124"/>
<dbReference type="VGNC" id="VGNC:26072">
    <property type="gene designation" value="ARGLU1"/>
</dbReference>
<dbReference type="eggNOG" id="ENOG502QPR5">
    <property type="taxonomic scope" value="Eukaryota"/>
</dbReference>
<dbReference type="GeneTree" id="ENSGT00730000111249"/>
<dbReference type="InParanoid" id="Q2TA42"/>
<dbReference type="OMA" id="VNSHGRH"/>
<dbReference type="Proteomes" id="UP000009136">
    <property type="component" value="Chromosome 12"/>
</dbReference>
<dbReference type="Bgee" id="ENSBTAG00000015124">
    <property type="expression patterns" value="Expressed in retropharyngeal lymph node and 106 other cell types or tissues"/>
</dbReference>
<dbReference type="GO" id="GO:0005694">
    <property type="term" value="C:chromosome"/>
    <property type="evidence" value="ECO:0007669"/>
    <property type="project" value="UniProtKB-SubCell"/>
</dbReference>
<dbReference type="GO" id="GO:0005829">
    <property type="term" value="C:cytosol"/>
    <property type="evidence" value="ECO:0007669"/>
    <property type="project" value="Ensembl"/>
</dbReference>
<dbReference type="GO" id="GO:0005739">
    <property type="term" value="C:mitochondrion"/>
    <property type="evidence" value="ECO:0000318"/>
    <property type="project" value="GO_Central"/>
</dbReference>
<dbReference type="GO" id="GO:0016607">
    <property type="term" value="C:nuclear speck"/>
    <property type="evidence" value="ECO:0000250"/>
    <property type="project" value="UniProtKB"/>
</dbReference>
<dbReference type="GO" id="GO:0005654">
    <property type="term" value="C:nucleoplasm"/>
    <property type="evidence" value="ECO:0000318"/>
    <property type="project" value="GO_Central"/>
</dbReference>
<dbReference type="GO" id="GO:0036002">
    <property type="term" value="F:pre-mRNA binding"/>
    <property type="evidence" value="ECO:0000250"/>
    <property type="project" value="UniProtKB"/>
</dbReference>
<dbReference type="GO" id="GO:0003713">
    <property type="term" value="F:transcription coactivator activity"/>
    <property type="evidence" value="ECO:0000250"/>
    <property type="project" value="UniProtKB"/>
</dbReference>
<dbReference type="GO" id="GO:0006397">
    <property type="term" value="P:mRNA processing"/>
    <property type="evidence" value="ECO:0007669"/>
    <property type="project" value="UniProtKB-KW"/>
</dbReference>
<dbReference type="GO" id="GO:0000381">
    <property type="term" value="P:regulation of alternative mRNA splicing, via spliceosome"/>
    <property type="evidence" value="ECO:0000250"/>
    <property type="project" value="UniProtKB"/>
</dbReference>
<dbReference type="GO" id="GO:0008380">
    <property type="term" value="P:RNA splicing"/>
    <property type="evidence" value="ECO:0007669"/>
    <property type="project" value="UniProtKB-KW"/>
</dbReference>
<dbReference type="InterPro" id="IPR033371">
    <property type="entry name" value="ARGLU1"/>
</dbReference>
<dbReference type="PANTHER" id="PTHR31711">
    <property type="entry name" value="ARGININE AND GLUTAMATE-RICH PROTEIN 1"/>
    <property type="match status" value="1"/>
</dbReference>
<dbReference type="PANTHER" id="PTHR31711:SF1">
    <property type="entry name" value="ARGININE AND GLUTAMATE-RICH PROTEIN 1"/>
    <property type="match status" value="1"/>
</dbReference>
<dbReference type="Pfam" id="PF15346">
    <property type="entry name" value="ARGLU"/>
    <property type="match status" value="1"/>
</dbReference>
<sequence>MGRSRSRSSSRSKHTKSSKHNKKRSRSRSRSRDKERVRKRSKSRESKRNRRRESRSRSRSTNTAVSRRERDRERASSPPDRIDIFGRTVSKRSSLDEKQKREEEEKKAEFERQRKIRQQEIEEKLIEEETARRVEELVAKRVEEELEKRKDEIEREVLRRVEEAKRIMEKQLLEELERQRQAELAAQKAREEEERAKREELERILEENNRKIAEAQAKLAEEQLRIVEEQRKIHEERMKLEQERQRQQKEEQKIILGKGKSRPKLSFSLKTQD</sequence>
<organism evidence="5">
    <name type="scientific">Bos taurus</name>
    <name type="common">Bovine</name>
    <dbReference type="NCBI Taxonomy" id="9913"/>
    <lineage>
        <taxon>Eukaryota</taxon>
        <taxon>Metazoa</taxon>
        <taxon>Chordata</taxon>
        <taxon>Craniata</taxon>
        <taxon>Vertebrata</taxon>
        <taxon>Euteleostomi</taxon>
        <taxon>Mammalia</taxon>
        <taxon>Eutheria</taxon>
        <taxon>Laurasiatheria</taxon>
        <taxon>Artiodactyla</taxon>
        <taxon>Ruminantia</taxon>
        <taxon>Pecora</taxon>
        <taxon>Bovidae</taxon>
        <taxon>Bovinae</taxon>
        <taxon>Bos</taxon>
    </lineage>
</organism>
<reference key="1">
    <citation type="submission" date="2005-12" db="EMBL/GenBank/DDBJ databases">
        <authorList>
            <consortium name="NIH - Mammalian Gene Collection (MGC) project"/>
        </authorList>
    </citation>
    <scope>NUCLEOTIDE SEQUENCE [LARGE SCALE MRNA]</scope>
    <source>
        <strain>Crossbred X Angus</strain>
        <tissue>Liver</tissue>
    </source>
</reference>